<proteinExistence type="inferred from homology"/>
<name>IF2P_THEPD</name>
<organism>
    <name type="scientific">Thermofilum pendens (strain DSM 2475 / Hrk 5)</name>
    <dbReference type="NCBI Taxonomy" id="368408"/>
    <lineage>
        <taxon>Archaea</taxon>
        <taxon>Thermoproteota</taxon>
        <taxon>Thermoprotei</taxon>
        <taxon>Thermofilales</taxon>
        <taxon>Thermofilaceae</taxon>
        <taxon>Thermofilum</taxon>
    </lineage>
</organism>
<gene>
    <name evidence="2" type="primary">infB</name>
    <name type="ordered locus">Tpen_0499</name>
</gene>
<keyword id="KW-0342">GTP-binding</keyword>
<keyword id="KW-0396">Initiation factor</keyword>
<keyword id="KW-0547">Nucleotide-binding</keyword>
<keyword id="KW-0648">Protein biosynthesis</keyword>
<keyword id="KW-1185">Reference proteome</keyword>
<feature type="chain" id="PRO_0000335536" description="Probable translation initiation factor IF-2">
    <location>
        <begin position="1"/>
        <end position="601"/>
    </location>
</feature>
<feature type="domain" description="tr-type G">
    <location>
        <begin position="10"/>
        <end position="227"/>
    </location>
</feature>
<feature type="region of interest" description="G1" evidence="1">
    <location>
        <begin position="19"/>
        <end position="26"/>
    </location>
</feature>
<feature type="region of interest" description="G2" evidence="1">
    <location>
        <begin position="44"/>
        <end position="48"/>
    </location>
</feature>
<feature type="region of interest" description="G3" evidence="1">
    <location>
        <begin position="83"/>
        <end position="86"/>
    </location>
</feature>
<feature type="region of interest" description="G4" evidence="1">
    <location>
        <begin position="137"/>
        <end position="140"/>
    </location>
</feature>
<feature type="region of interest" description="G5" evidence="1">
    <location>
        <begin position="205"/>
        <end position="207"/>
    </location>
</feature>
<feature type="binding site" evidence="2">
    <location>
        <begin position="19"/>
        <end position="26"/>
    </location>
    <ligand>
        <name>GTP</name>
        <dbReference type="ChEBI" id="CHEBI:37565"/>
    </ligand>
</feature>
<feature type="binding site" evidence="2">
    <location>
        <begin position="83"/>
        <end position="87"/>
    </location>
    <ligand>
        <name>GTP</name>
        <dbReference type="ChEBI" id="CHEBI:37565"/>
    </ligand>
</feature>
<feature type="binding site" evidence="2">
    <location>
        <begin position="137"/>
        <end position="140"/>
    </location>
    <ligand>
        <name>GTP</name>
        <dbReference type="ChEBI" id="CHEBI:37565"/>
    </ligand>
</feature>
<reference key="1">
    <citation type="journal article" date="2008" name="J. Bacteriol.">
        <title>Genome sequence of Thermofilum pendens reveals an exceptional loss of biosynthetic pathways without genome reduction.</title>
        <authorList>
            <person name="Anderson I."/>
            <person name="Rodriguez J."/>
            <person name="Susanti D."/>
            <person name="Porat I."/>
            <person name="Reich C."/>
            <person name="Ulrich L.E."/>
            <person name="Elkins J.G."/>
            <person name="Mavromatis K."/>
            <person name="Lykidis A."/>
            <person name="Kim E."/>
            <person name="Thompson L.S."/>
            <person name="Nolan M."/>
            <person name="Land M."/>
            <person name="Copeland A."/>
            <person name="Lapidus A."/>
            <person name="Lucas S."/>
            <person name="Detter C."/>
            <person name="Zhulin I.B."/>
            <person name="Olsen G.J."/>
            <person name="Whitman W."/>
            <person name="Mukhopadhyay B."/>
            <person name="Bristow J."/>
            <person name="Kyrpides N."/>
        </authorList>
    </citation>
    <scope>NUCLEOTIDE SEQUENCE [LARGE SCALE GENOMIC DNA]</scope>
    <source>
        <strain>DSM 2475 / Hrk 5</strain>
    </source>
</reference>
<accession>A1RXH6</accession>
<protein>
    <recommendedName>
        <fullName evidence="2">Probable translation initiation factor IF-2</fullName>
    </recommendedName>
</protein>
<comment type="function">
    <text evidence="2">Function in general translation initiation by promoting the binding of the formylmethionine-tRNA to ribosomes. Seems to function along with eIF-2.</text>
</comment>
<comment type="similarity">
    <text evidence="2">Belongs to the TRAFAC class translation factor GTPase superfamily. Classic translation factor GTPase family. IF-2 subfamily.</text>
</comment>
<sequence>MSNDQGSQFLRAPIVVVLGHVDAGKTTLLDKIRGTAVAKREPGTMTQHIGASFLPWKALEAVCGSLVSQIRAEVVIPGFLVIDTPGHEAFSNLRRRGGSIADIAILVVDVLRGLEQQTFESIDILRERKVPFIVAVNKIDKIPGWKSFPNTPFVESVKRQSEAAQLKLEELLSYIIQQFASLGFRSDRYDRIRDFTRVLALVPVSAVTGEGIPDLLLVLAGLAQRYLKGRLLASIAPGKGVILELKEEAGLGMTATLILYDGVIRRGDIVVTGGIEGAFSTRVRALLMPKPLDEMRSPEDRFLEVERIVAAAGVKLVAEGLEKAVPGAPLFVAVSEEEVGRLKQLVEEEISGVKFERDVVGVVVKADTLGTLEALVGYLKKQGIPIRVADIGPVVKRDVVQASMVKEKDPLYAAILAFNVKILPEAQDEAARHGIPVFQERIMYKLVENYQKWLQETRDAEVRKAFEKITPPAVVQILPGYVFRRRDPIIVGVRVVCGRIRSGVPLITKDGREIGEIMQIKEHDKVLDVVSEGAEVAISIRSKAIVGRQVKEGDYLYSNLSIEEINRLLEKYEKYLAENEKSYLRKLMRFKMGLSKEIEYP</sequence>
<dbReference type="EMBL" id="CP000505">
    <property type="protein sequence ID" value="ABL77906.1"/>
    <property type="molecule type" value="Genomic_DNA"/>
</dbReference>
<dbReference type="RefSeq" id="WP_011752171.1">
    <property type="nucleotide sequence ID" value="NC_008698.1"/>
</dbReference>
<dbReference type="SMR" id="A1RXH6"/>
<dbReference type="STRING" id="368408.Tpen_0499"/>
<dbReference type="EnsemblBacteria" id="ABL77906">
    <property type="protein sequence ID" value="ABL77906"/>
    <property type="gene ID" value="Tpen_0499"/>
</dbReference>
<dbReference type="GeneID" id="4601333"/>
<dbReference type="KEGG" id="tpe:Tpen_0499"/>
<dbReference type="eggNOG" id="arCOG01560">
    <property type="taxonomic scope" value="Archaea"/>
</dbReference>
<dbReference type="HOGENOM" id="CLU_002656_3_3_2"/>
<dbReference type="OrthoDB" id="30957at2157"/>
<dbReference type="Proteomes" id="UP000000641">
    <property type="component" value="Chromosome"/>
</dbReference>
<dbReference type="GO" id="GO:0005737">
    <property type="term" value="C:cytoplasm"/>
    <property type="evidence" value="ECO:0007669"/>
    <property type="project" value="TreeGrafter"/>
</dbReference>
<dbReference type="GO" id="GO:0005525">
    <property type="term" value="F:GTP binding"/>
    <property type="evidence" value="ECO:0007669"/>
    <property type="project" value="UniProtKB-KW"/>
</dbReference>
<dbReference type="GO" id="GO:0003924">
    <property type="term" value="F:GTPase activity"/>
    <property type="evidence" value="ECO:0007669"/>
    <property type="project" value="UniProtKB-UniRule"/>
</dbReference>
<dbReference type="GO" id="GO:0003743">
    <property type="term" value="F:translation initiation factor activity"/>
    <property type="evidence" value="ECO:0007669"/>
    <property type="project" value="UniProtKB-UniRule"/>
</dbReference>
<dbReference type="CDD" id="cd03703">
    <property type="entry name" value="aeIF5B_II"/>
    <property type="match status" value="1"/>
</dbReference>
<dbReference type="CDD" id="cd16266">
    <property type="entry name" value="IF2_aeIF5B_IV"/>
    <property type="match status" value="1"/>
</dbReference>
<dbReference type="CDD" id="cd01887">
    <property type="entry name" value="IF2_eIF5B"/>
    <property type="match status" value="1"/>
</dbReference>
<dbReference type="FunFam" id="3.40.50.300:FF:000112">
    <property type="entry name" value="Eukaryotic translation initiation factor 5B"/>
    <property type="match status" value="1"/>
</dbReference>
<dbReference type="FunFam" id="3.40.50.10050:FF:000001">
    <property type="entry name" value="Translation initiation factor IF-2"/>
    <property type="match status" value="1"/>
</dbReference>
<dbReference type="Gene3D" id="3.40.50.300">
    <property type="entry name" value="P-loop containing nucleotide triphosphate hydrolases"/>
    <property type="match status" value="1"/>
</dbReference>
<dbReference type="Gene3D" id="2.40.30.10">
    <property type="entry name" value="Translation factors"/>
    <property type="match status" value="2"/>
</dbReference>
<dbReference type="Gene3D" id="3.40.50.10050">
    <property type="entry name" value="Translation initiation factor IF- 2, domain 3"/>
    <property type="match status" value="1"/>
</dbReference>
<dbReference type="HAMAP" id="MF_00100_A">
    <property type="entry name" value="IF_2_A"/>
    <property type="match status" value="1"/>
</dbReference>
<dbReference type="InterPro" id="IPR029459">
    <property type="entry name" value="EFTU-type"/>
</dbReference>
<dbReference type="InterPro" id="IPR027417">
    <property type="entry name" value="P-loop_NTPase"/>
</dbReference>
<dbReference type="InterPro" id="IPR005225">
    <property type="entry name" value="Small_GTP-bd"/>
</dbReference>
<dbReference type="InterPro" id="IPR000795">
    <property type="entry name" value="T_Tr_GTP-bd_dom"/>
</dbReference>
<dbReference type="InterPro" id="IPR004544">
    <property type="entry name" value="TF_aIF-2_arc"/>
</dbReference>
<dbReference type="InterPro" id="IPR015760">
    <property type="entry name" value="TIF_IF2"/>
</dbReference>
<dbReference type="InterPro" id="IPR023115">
    <property type="entry name" value="TIF_IF2_dom3"/>
</dbReference>
<dbReference type="InterPro" id="IPR036925">
    <property type="entry name" value="TIF_IF2_dom3_sf"/>
</dbReference>
<dbReference type="InterPro" id="IPR009000">
    <property type="entry name" value="Transl_B-barrel_sf"/>
</dbReference>
<dbReference type="NCBIfam" id="TIGR00491">
    <property type="entry name" value="aIF-2"/>
    <property type="match status" value="1"/>
</dbReference>
<dbReference type="NCBIfam" id="NF003078">
    <property type="entry name" value="PRK04004.1"/>
    <property type="match status" value="1"/>
</dbReference>
<dbReference type="NCBIfam" id="TIGR00231">
    <property type="entry name" value="small_GTP"/>
    <property type="match status" value="1"/>
</dbReference>
<dbReference type="PANTHER" id="PTHR43381:SF4">
    <property type="entry name" value="EUKARYOTIC TRANSLATION INITIATION FACTOR 5B"/>
    <property type="match status" value="1"/>
</dbReference>
<dbReference type="PANTHER" id="PTHR43381">
    <property type="entry name" value="TRANSLATION INITIATION FACTOR IF-2-RELATED"/>
    <property type="match status" value="1"/>
</dbReference>
<dbReference type="Pfam" id="PF00009">
    <property type="entry name" value="GTP_EFTU"/>
    <property type="match status" value="1"/>
</dbReference>
<dbReference type="Pfam" id="PF14578">
    <property type="entry name" value="GTP_EFTU_D4"/>
    <property type="match status" value="1"/>
</dbReference>
<dbReference type="Pfam" id="PF11987">
    <property type="entry name" value="IF-2"/>
    <property type="match status" value="1"/>
</dbReference>
<dbReference type="PRINTS" id="PR00315">
    <property type="entry name" value="ELONGATNFCT"/>
</dbReference>
<dbReference type="SUPFAM" id="SSF52156">
    <property type="entry name" value="Initiation factor IF2/eIF5b, domain 3"/>
    <property type="match status" value="1"/>
</dbReference>
<dbReference type="SUPFAM" id="SSF52540">
    <property type="entry name" value="P-loop containing nucleoside triphosphate hydrolases"/>
    <property type="match status" value="1"/>
</dbReference>
<dbReference type="SUPFAM" id="SSF50447">
    <property type="entry name" value="Translation proteins"/>
    <property type="match status" value="1"/>
</dbReference>
<dbReference type="PROSITE" id="PS51722">
    <property type="entry name" value="G_TR_2"/>
    <property type="match status" value="1"/>
</dbReference>
<evidence type="ECO:0000250" key="1"/>
<evidence type="ECO:0000255" key="2">
    <source>
        <dbReference type="HAMAP-Rule" id="MF_00100"/>
    </source>
</evidence>